<comment type="similarity">
    <text evidence="1">Belongs to the bacterial ribosomal protein bL35 family.</text>
</comment>
<protein>
    <recommendedName>
        <fullName evidence="1">Large ribosomal subunit protein bL35</fullName>
    </recommendedName>
    <alternativeName>
        <fullName evidence="2">50S ribosomal protein L35</fullName>
    </alternativeName>
</protein>
<feature type="chain" id="PRO_1000127426" description="Large ribosomal subunit protein bL35">
    <location>
        <begin position="1"/>
        <end position="68"/>
    </location>
</feature>
<sequence length="68" mass="7761">MTKIKLKTKSSVKKRFHLTAKGKVISTQSGKRHGMVKRSKSNIRNQRGTTILNKSDSRIVKLYMPYGI</sequence>
<accession>B3CLK3</accession>
<evidence type="ECO:0000255" key="1">
    <source>
        <dbReference type="HAMAP-Rule" id="MF_00514"/>
    </source>
</evidence>
<evidence type="ECO:0000305" key="2"/>
<name>RL35_WOLPP</name>
<proteinExistence type="inferred from homology"/>
<reference key="1">
    <citation type="journal article" date="2008" name="Mol. Biol. Evol.">
        <title>Genome evolution of Wolbachia strain wPip from the Culex pipiens group.</title>
        <authorList>
            <person name="Klasson L."/>
            <person name="Walker T."/>
            <person name="Sebaihia M."/>
            <person name="Sanders M.J."/>
            <person name="Quail M.A."/>
            <person name="Lord A."/>
            <person name="Sanders S."/>
            <person name="Earl J."/>
            <person name="O'Neill S.L."/>
            <person name="Thomson N."/>
            <person name="Sinkins S.P."/>
            <person name="Parkhill J."/>
        </authorList>
    </citation>
    <scope>NUCLEOTIDE SEQUENCE [LARGE SCALE GENOMIC DNA]</scope>
    <source>
        <strain>wPip</strain>
    </source>
</reference>
<organism>
    <name type="scientific">Wolbachia pipientis subsp. Culex pipiens (strain wPip)</name>
    <dbReference type="NCBI Taxonomy" id="570417"/>
    <lineage>
        <taxon>Bacteria</taxon>
        <taxon>Pseudomonadati</taxon>
        <taxon>Pseudomonadota</taxon>
        <taxon>Alphaproteobacteria</taxon>
        <taxon>Rickettsiales</taxon>
        <taxon>Anaplasmataceae</taxon>
        <taxon>Wolbachieae</taxon>
        <taxon>Wolbachia</taxon>
    </lineage>
</organism>
<keyword id="KW-0687">Ribonucleoprotein</keyword>
<keyword id="KW-0689">Ribosomal protein</keyword>
<gene>
    <name evidence="1" type="primary">rpmI</name>
    <name type="ordered locus">WP0663</name>
</gene>
<dbReference type="EMBL" id="AM999887">
    <property type="protein sequence ID" value="CAQ54771.1"/>
    <property type="molecule type" value="Genomic_DNA"/>
</dbReference>
<dbReference type="RefSeq" id="WP_006013548.1">
    <property type="nucleotide sequence ID" value="NC_010981.1"/>
</dbReference>
<dbReference type="SMR" id="B3CLK3"/>
<dbReference type="KEGG" id="wpi:WP0663"/>
<dbReference type="eggNOG" id="COG0291">
    <property type="taxonomic scope" value="Bacteria"/>
</dbReference>
<dbReference type="HOGENOM" id="CLU_169643_2_1_5"/>
<dbReference type="Proteomes" id="UP000008814">
    <property type="component" value="Chromosome"/>
</dbReference>
<dbReference type="GO" id="GO:0022625">
    <property type="term" value="C:cytosolic large ribosomal subunit"/>
    <property type="evidence" value="ECO:0007669"/>
    <property type="project" value="TreeGrafter"/>
</dbReference>
<dbReference type="GO" id="GO:0003735">
    <property type="term" value="F:structural constituent of ribosome"/>
    <property type="evidence" value="ECO:0007669"/>
    <property type="project" value="InterPro"/>
</dbReference>
<dbReference type="GO" id="GO:0006412">
    <property type="term" value="P:translation"/>
    <property type="evidence" value="ECO:0007669"/>
    <property type="project" value="UniProtKB-UniRule"/>
</dbReference>
<dbReference type="FunFam" id="4.10.410.60:FF:000001">
    <property type="entry name" value="50S ribosomal protein L35"/>
    <property type="match status" value="1"/>
</dbReference>
<dbReference type="Gene3D" id="4.10.410.60">
    <property type="match status" value="1"/>
</dbReference>
<dbReference type="HAMAP" id="MF_00514">
    <property type="entry name" value="Ribosomal_bL35"/>
    <property type="match status" value="1"/>
</dbReference>
<dbReference type="InterPro" id="IPR001706">
    <property type="entry name" value="Ribosomal_bL35"/>
</dbReference>
<dbReference type="InterPro" id="IPR021137">
    <property type="entry name" value="Ribosomal_bL35-like"/>
</dbReference>
<dbReference type="InterPro" id="IPR018265">
    <property type="entry name" value="Ribosomal_bL35_CS"/>
</dbReference>
<dbReference type="InterPro" id="IPR037229">
    <property type="entry name" value="Ribosomal_bL35_sf"/>
</dbReference>
<dbReference type="NCBIfam" id="TIGR00001">
    <property type="entry name" value="rpmI_bact"/>
    <property type="match status" value="1"/>
</dbReference>
<dbReference type="PANTHER" id="PTHR33343">
    <property type="entry name" value="54S RIBOSOMAL PROTEIN BL35M"/>
    <property type="match status" value="1"/>
</dbReference>
<dbReference type="PANTHER" id="PTHR33343:SF1">
    <property type="entry name" value="LARGE RIBOSOMAL SUBUNIT PROTEIN BL35M"/>
    <property type="match status" value="1"/>
</dbReference>
<dbReference type="Pfam" id="PF01632">
    <property type="entry name" value="Ribosomal_L35p"/>
    <property type="match status" value="1"/>
</dbReference>
<dbReference type="PRINTS" id="PR00064">
    <property type="entry name" value="RIBOSOMALL35"/>
</dbReference>
<dbReference type="SUPFAM" id="SSF143034">
    <property type="entry name" value="L35p-like"/>
    <property type="match status" value="1"/>
</dbReference>
<dbReference type="PROSITE" id="PS00936">
    <property type="entry name" value="RIBOSOMAL_L35"/>
    <property type="match status" value="1"/>
</dbReference>